<protein>
    <recommendedName>
        <fullName>Pyruvate, phosphate dikinase</fullName>
        <ecNumber evidence="3">2.7.9.1</ecNumber>
    </recommendedName>
    <alternativeName>
        <fullName>Pyruvate, orthophosphate dikinase</fullName>
    </alternativeName>
</protein>
<accession>Q59754</accession>
<accession>Q59755</accession>
<accession>Q59756</accession>
<organism>
    <name type="scientific">Rhizobium meliloti (strain 1021)</name>
    <name type="common">Ensifer meliloti</name>
    <name type="synonym">Sinorhizobium meliloti</name>
    <dbReference type="NCBI Taxonomy" id="266834"/>
    <lineage>
        <taxon>Bacteria</taxon>
        <taxon>Pseudomonadati</taxon>
        <taxon>Pseudomonadota</taxon>
        <taxon>Alphaproteobacteria</taxon>
        <taxon>Hyphomicrobiales</taxon>
        <taxon>Rhizobiaceae</taxon>
        <taxon>Sinorhizobium/Ensifer group</taxon>
        <taxon>Sinorhizobium</taxon>
    </lineage>
</organism>
<dbReference type="EC" id="2.7.9.1" evidence="3"/>
<dbReference type="EMBL" id="AL591688">
    <property type="protein sequence ID" value="CAC45504.1"/>
    <property type="molecule type" value="Genomic_DNA"/>
</dbReference>
<dbReference type="EMBL" id="AH005244">
    <property type="protein sequence ID" value="AAB58818.1"/>
    <property type="molecule type" value="Genomic_DNA"/>
</dbReference>
<dbReference type="EMBL" id="AH005244">
    <property type="protein sequence ID" value="AAB58819.1"/>
    <property type="molecule type" value="Genomic_DNA"/>
</dbReference>
<dbReference type="EMBL" id="AH005244">
    <property type="protein sequence ID" value="AAB58820.1"/>
    <property type="molecule type" value="Genomic_DNA"/>
</dbReference>
<dbReference type="RefSeq" id="NP_385038.1">
    <property type="nucleotide sequence ID" value="NC_003047.1"/>
</dbReference>
<dbReference type="RefSeq" id="WP_010968929.1">
    <property type="nucleotide sequence ID" value="NC_003047.1"/>
</dbReference>
<dbReference type="SMR" id="Q59754"/>
<dbReference type="EnsemblBacteria" id="CAC45504">
    <property type="protein sequence ID" value="CAC45504"/>
    <property type="gene ID" value="SMc00025"/>
</dbReference>
<dbReference type="KEGG" id="sme:SMc00025"/>
<dbReference type="PATRIC" id="fig|266834.11.peg.2330"/>
<dbReference type="eggNOG" id="COG0574">
    <property type="taxonomic scope" value="Bacteria"/>
</dbReference>
<dbReference type="eggNOG" id="COG1080">
    <property type="taxonomic scope" value="Bacteria"/>
</dbReference>
<dbReference type="HOGENOM" id="CLU_015345_0_2_5"/>
<dbReference type="OrthoDB" id="9765468at2"/>
<dbReference type="Proteomes" id="UP000001976">
    <property type="component" value="Chromosome"/>
</dbReference>
<dbReference type="GO" id="GO:0005524">
    <property type="term" value="F:ATP binding"/>
    <property type="evidence" value="ECO:0007669"/>
    <property type="project" value="UniProtKB-KW"/>
</dbReference>
<dbReference type="GO" id="GO:0016301">
    <property type="term" value="F:kinase activity"/>
    <property type="evidence" value="ECO:0007669"/>
    <property type="project" value="UniProtKB-KW"/>
</dbReference>
<dbReference type="GO" id="GO:0046872">
    <property type="term" value="F:metal ion binding"/>
    <property type="evidence" value="ECO:0007669"/>
    <property type="project" value="UniProtKB-KW"/>
</dbReference>
<dbReference type="GO" id="GO:0050242">
    <property type="term" value="F:pyruvate, phosphate dikinase activity"/>
    <property type="evidence" value="ECO:0007669"/>
    <property type="project" value="UniProtKB-EC"/>
</dbReference>
<dbReference type="Gene3D" id="1.20.80.30">
    <property type="match status" value="1"/>
</dbReference>
<dbReference type="Gene3D" id="3.30.1490.20">
    <property type="entry name" value="ATP-grasp fold, A domain"/>
    <property type="match status" value="1"/>
</dbReference>
<dbReference type="Gene3D" id="3.30.470.20">
    <property type="entry name" value="ATP-grasp fold, B domain"/>
    <property type="match status" value="1"/>
</dbReference>
<dbReference type="Gene3D" id="3.20.20.60">
    <property type="entry name" value="Phosphoenolpyruvate-binding domains"/>
    <property type="match status" value="1"/>
</dbReference>
<dbReference type="Gene3D" id="3.50.30.10">
    <property type="entry name" value="Phosphohistidine domain"/>
    <property type="match status" value="1"/>
</dbReference>
<dbReference type="Gene3D" id="1.10.189.10">
    <property type="entry name" value="Pyruvate Phosphate Dikinase, domain 2"/>
    <property type="match status" value="1"/>
</dbReference>
<dbReference type="InterPro" id="IPR013815">
    <property type="entry name" value="ATP_grasp_subdomain_1"/>
</dbReference>
<dbReference type="InterPro" id="IPR008279">
    <property type="entry name" value="PEP-util_enz_mobile_dom"/>
</dbReference>
<dbReference type="InterPro" id="IPR018274">
    <property type="entry name" value="PEP_util_AS"/>
</dbReference>
<dbReference type="InterPro" id="IPR000121">
    <property type="entry name" value="PEP_util_C"/>
</dbReference>
<dbReference type="InterPro" id="IPR023151">
    <property type="entry name" value="PEP_util_CS"/>
</dbReference>
<dbReference type="InterPro" id="IPR036637">
    <property type="entry name" value="Phosphohistidine_dom_sf"/>
</dbReference>
<dbReference type="InterPro" id="IPR002192">
    <property type="entry name" value="PPDK_AMP/ATP-bd"/>
</dbReference>
<dbReference type="InterPro" id="IPR010121">
    <property type="entry name" value="Pyruvate_phosphate_dikinase"/>
</dbReference>
<dbReference type="InterPro" id="IPR015813">
    <property type="entry name" value="Pyrv/PenolPyrv_kinase-like_dom"/>
</dbReference>
<dbReference type="InterPro" id="IPR040442">
    <property type="entry name" value="Pyrv_kinase-like_dom_sf"/>
</dbReference>
<dbReference type="NCBIfam" id="NF004531">
    <property type="entry name" value="PRK05878.1"/>
    <property type="match status" value="1"/>
</dbReference>
<dbReference type="NCBIfam" id="TIGR01828">
    <property type="entry name" value="pyru_phos_dikin"/>
    <property type="match status" value="1"/>
</dbReference>
<dbReference type="PANTHER" id="PTHR22931">
    <property type="entry name" value="PHOSPHOENOLPYRUVATE DIKINASE-RELATED"/>
    <property type="match status" value="1"/>
</dbReference>
<dbReference type="PANTHER" id="PTHR22931:SF9">
    <property type="entry name" value="PYRUVATE, PHOSPHATE DIKINASE 1, CHLOROPLASTIC"/>
    <property type="match status" value="1"/>
</dbReference>
<dbReference type="Pfam" id="PF00391">
    <property type="entry name" value="PEP-utilizers"/>
    <property type="match status" value="1"/>
</dbReference>
<dbReference type="Pfam" id="PF02896">
    <property type="entry name" value="PEP-utilizers_C"/>
    <property type="match status" value="1"/>
</dbReference>
<dbReference type="Pfam" id="PF01326">
    <property type="entry name" value="PPDK_N"/>
    <property type="match status" value="2"/>
</dbReference>
<dbReference type="PIRSF" id="PIRSF000853">
    <property type="entry name" value="PPDK"/>
    <property type="match status" value="1"/>
</dbReference>
<dbReference type="SUPFAM" id="SSF56059">
    <property type="entry name" value="Glutathione synthetase ATP-binding domain-like"/>
    <property type="match status" value="1"/>
</dbReference>
<dbReference type="SUPFAM" id="SSF51621">
    <property type="entry name" value="Phosphoenolpyruvate/pyruvate domain"/>
    <property type="match status" value="1"/>
</dbReference>
<dbReference type="SUPFAM" id="SSF52009">
    <property type="entry name" value="Phosphohistidine domain"/>
    <property type="match status" value="1"/>
</dbReference>
<dbReference type="PROSITE" id="PS00742">
    <property type="entry name" value="PEP_ENZYMES_2"/>
    <property type="match status" value="1"/>
</dbReference>
<dbReference type="PROSITE" id="PS00370">
    <property type="entry name" value="PEP_ENZYMES_PHOS_SITE"/>
    <property type="match status" value="1"/>
</dbReference>
<gene>
    <name type="primary">ppdK</name>
    <name type="synonym">podA</name>
    <name type="ordered locus">R00932</name>
    <name type="ORF">SMc00025</name>
</gene>
<proteinExistence type="inferred from homology"/>
<reference key="1">
    <citation type="journal article" date="2001" name="Proc. Natl. Acad. Sci. U.S.A.">
        <title>Analysis of the chromosome sequence of the legume symbiont Sinorhizobium meliloti strain 1021.</title>
        <authorList>
            <person name="Capela D."/>
            <person name="Barloy-Hubler F."/>
            <person name="Gouzy J."/>
            <person name="Bothe G."/>
            <person name="Ampe F."/>
            <person name="Batut J."/>
            <person name="Boistard P."/>
            <person name="Becker A."/>
            <person name="Boutry M."/>
            <person name="Cadieu E."/>
            <person name="Dreano S."/>
            <person name="Gloux S."/>
            <person name="Godrie T."/>
            <person name="Goffeau A."/>
            <person name="Kahn D."/>
            <person name="Kiss E."/>
            <person name="Lelaure V."/>
            <person name="Masuy D."/>
            <person name="Pohl T."/>
            <person name="Portetelle D."/>
            <person name="Puehler A."/>
            <person name="Purnelle B."/>
            <person name="Ramsperger U."/>
            <person name="Renard C."/>
            <person name="Thebault P."/>
            <person name="Vandenbol M."/>
            <person name="Weidner S."/>
            <person name="Galibert F."/>
        </authorList>
    </citation>
    <scope>NUCLEOTIDE SEQUENCE [LARGE SCALE GENOMIC DNA]</scope>
    <source>
        <strain>1021</strain>
    </source>
</reference>
<reference key="2">
    <citation type="journal article" date="2001" name="Science">
        <title>The composite genome of the legume symbiont Sinorhizobium meliloti.</title>
        <authorList>
            <person name="Galibert F."/>
            <person name="Finan T.M."/>
            <person name="Long S.R."/>
            <person name="Puehler A."/>
            <person name="Abola P."/>
            <person name="Ampe F."/>
            <person name="Barloy-Hubler F."/>
            <person name="Barnett M.J."/>
            <person name="Becker A."/>
            <person name="Boistard P."/>
            <person name="Bothe G."/>
            <person name="Boutry M."/>
            <person name="Bowser L."/>
            <person name="Buhrmester J."/>
            <person name="Cadieu E."/>
            <person name="Capela D."/>
            <person name="Chain P."/>
            <person name="Cowie A."/>
            <person name="Davis R.W."/>
            <person name="Dreano S."/>
            <person name="Federspiel N.A."/>
            <person name="Fisher R.F."/>
            <person name="Gloux S."/>
            <person name="Godrie T."/>
            <person name="Goffeau A."/>
            <person name="Golding B."/>
            <person name="Gouzy J."/>
            <person name="Gurjal M."/>
            <person name="Hernandez-Lucas I."/>
            <person name="Hong A."/>
            <person name="Huizar L."/>
            <person name="Hyman R.W."/>
            <person name="Jones T."/>
            <person name="Kahn D."/>
            <person name="Kahn M.L."/>
            <person name="Kalman S."/>
            <person name="Keating D.H."/>
            <person name="Kiss E."/>
            <person name="Komp C."/>
            <person name="Lelaure V."/>
            <person name="Masuy D."/>
            <person name="Palm C."/>
            <person name="Peck M.C."/>
            <person name="Pohl T.M."/>
            <person name="Portetelle D."/>
            <person name="Purnelle B."/>
            <person name="Ramsperger U."/>
            <person name="Surzycki R."/>
            <person name="Thebault P."/>
            <person name="Vandenbol M."/>
            <person name="Vorhoelter F.J."/>
            <person name="Weidner S."/>
            <person name="Wells D.H."/>
            <person name="Wong K."/>
            <person name="Yeh K.-C."/>
            <person name="Batut J."/>
        </authorList>
    </citation>
    <scope>NUCLEOTIDE SEQUENCE [LARGE SCALE GENOMIC DNA]</scope>
    <source>
        <strain>1021</strain>
    </source>
</reference>
<reference key="3">
    <citation type="journal article" date="1997" name="Microbiology">
        <title>Increased pyruvate orthophosphate dikinase activity results in an alternative gluconeogenic pathway in Rhizobium (Sinorhizobium) meliloti.</title>
        <authorList>
            <person name="Oesteraas M."/>
            <person name="Driscoll B.T."/>
            <person name="Finan T.M."/>
        </authorList>
    </citation>
    <scope>NUCLEOTIDE SEQUENCE [GENOMIC DNA] OF 77-190; 202-266 AND 711-758</scope>
    <source>
        <strain>RCR2011 / SU47</strain>
    </source>
</reference>
<comment type="function">
    <text evidence="3">Catalyzes the reversible phosphorylation of pyruvate and phosphate.</text>
</comment>
<comment type="catalytic activity">
    <reaction evidence="3">
        <text>pyruvate + phosphate + ATP = phosphoenolpyruvate + AMP + diphosphate + H(+)</text>
        <dbReference type="Rhea" id="RHEA:10756"/>
        <dbReference type="ChEBI" id="CHEBI:15361"/>
        <dbReference type="ChEBI" id="CHEBI:15378"/>
        <dbReference type="ChEBI" id="CHEBI:30616"/>
        <dbReference type="ChEBI" id="CHEBI:33019"/>
        <dbReference type="ChEBI" id="CHEBI:43474"/>
        <dbReference type="ChEBI" id="CHEBI:58702"/>
        <dbReference type="ChEBI" id="CHEBI:456215"/>
        <dbReference type="EC" id="2.7.9.1"/>
    </reaction>
</comment>
<comment type="cofactor">
    <cofactor evidence="2">
        <name>Mg(2+)</name>
        <dbReference type="ChEBI" id="CHEBI:18420"/>
    </cofactor>
</comment>
<comment type="activity regulation">
    <text evidence="1">Activated by light-induced dephosphorylation. Inhibited by dark-induced phosphorylation. Both reactions are catalyzed by PDRP1 (By similarity).</text>
</comment>
<comment type="subunit">
    <text evidence="1">Homodimer.</text>
</comment>
<comment type="domain">
    <text evidence="1">The N-terminal domain contains the ATP/Pi active site, the central domain the pyrophosphate/phosphate carrier histidine, and the C-terminal domain the pyruvate active site.</text>
</comment>
<comment type="PTM">
    <text evidence="1">Phosphorylation of Thr-466 in the dark inactivates the enzyme. Dephosphorylation upon light stimulation reactivates the enzyme (By similarity).</text>
</comment>
<comment type="miscellaneous">
    <text>The reaction takes place in three steps, each mediated by a carrier histidine residue located on the surface of the central domain. The two first partial reactions are catalyzed at an active site located on the N-terminal domain, and the third partial reaction is catalyzed at an active site located on the C-terminal domain. For catalytic turnover, the central domain swivels from the concave surface of the N-terminal domain to that of the C-terminal domain.</text>
</comment>
<comment type="similarity">
    <text evidence="5">Belongs to the PEP-utilizing enzyme family.</text>
</comment>
<evidence type="ECO:0000250" key="1"/>
<evidence type="ECO:0000250" key="2">
    <source>
        <dbReference type="UniProtKB" id="P11155"/>
    </source>
</evidence>
<evidence type="ECO:0000250" key="3">
    <source>
        <dbReference type="UniProtKB" id="P22983"/>
    </source>
</evidence>
<evidence type="ECO:0000255" key="4"/>
<evidence type="ECO:0000305" key="5"/>
<feature type="chain" id="PRO_0000147047" description="Pyruvate, phosphate dikinase">
    <location>
        <begin position="1"/>
        <end position="898"/>
    </location>
</feature>
<feature type="region of interest" description="N-terminal">
    <location>
        <begin position="1"/>
        <end position="355"/>
    </location>
</feature>
<feature type="region of interest" description="Linker 1">
    <location>
        <begin position="356"/>
        <end position="412"/>
    </location>
</feature>
<feature type="region of interest" description="Central">
    <location>
        <begin position="413"/>
        <end position="511"/>
    </location>
</feature>
<feature type="region of interest" description="Linker 2">
    <location>
        <begin position="512"/>
        <end position="546"/>
    </location>
</feature>
<feature type="region of interest" description="C-terminal">
    <location>
        <begin position="547"/>
        <end position="898"/>
    </location>
</feature>
<feature type="active site" description="Tele-phosphohistidine intermediate" evidence="2">
    <location>
        <position position="468"/>
    </location>
</feature>
<feature type="active site" description="Proton donor" evidence="2">
    <location>
        <position position="844"/>
    </location>
</feature>
<feature type="binding site" evidence="4">
    <location>
        <position position="96"/>
    </location>
    <ligand>
        <name>ATP</name>
        <dbReference type="ChEBI" id="CHEBI:30616"/>
    </ligand>
</feature>
<feature type="binding site" evidence="2">
    <location>
        <position position="574"/>
    </location>
    <ligand>
        <name>substrate</name>
    </ligand>
</feature>
<feature type="binding site" evidence="2">
    <location>
        <position position="630"/>
    </location>
    <ligand>
        <name>substrate</name>
    </ligand>
</feature>
<feature type="binding site" evidence="2">
    <location>
        <position position="758"/>
    </location>
    <ligand>
        <name>Mg(2+)</name>
        <dbReference type="ChEBI" id="CHEBI:18420"/>
    </ligand>
</feature>
<feature type="binding site" evidence="2">
    <location>
        <position position="758"/>
    </location>
    <ligand>
        <name>substrate</name>
    </ligand>
</feature>
<feature type="binding site" evidence="2">
    <location>
        <position position="779"/>
    </location>
    <ligand>
        <name>substrate</name>
    </ligand>
</feature>
<feature type="binding site" evidence="2">
    <location>
        <position position="780"/>
    </location>
    <ligand>
        <name>substrate</name>
    </ligand>
</feature>
<feature type="binding site" evidence="2">
    <location>
        <position position="781"/>
    </location>
    <ligand>
        <name>substrate</name>
    </ligand>
</feature>
<feature type="binding site" evidence="2">
    <location>
        <position position="782"/>
    </location>
    <ligand>
        <name>Mg(2+)</name>
        <dbReference type="ChEBI" id="CHEBI:18420"/>
    </ligand>
</feature>
<feature type="binding site" evidence="2">
    <location>
        <position position="782"/>
    </location>
    <ligand>
        <name>substrate</name>
    </ligand>
</feature>
<feature type="modified residue" description="Phosphothreonine; by PDRP1" evidence="1">
    <location>
        <position position="466"/>
    </location>
</feature>
<feature type="sequence conflict" description="In Ref. 3; AAB58818." evidence="5" ref="3">
    <original>N</original>
    <variation>I</variation>
    <location>
        <position position="88"/>
    </location>
</feature>
<feature type="sequence conflict" description="In Ref. 3; AAB58818." evidence="5" ref="3">
    <original>G</original>
    <variation>D</variation>
    <location>
        <position position="128"/>
    </location>
</feature>
<feature type="sequence conflict" description="In Ref. 3." evidence="5" ref="3">
    <original>AV</original>
    <variation>LL</variation>
    <location>
        <begin position="711"/>
        <end position="712"/>
    </location>
</feature>
<feature type="sequence conflict" description="In Ref. 3." evidence="5" ref="3">
    <original>GL</original>
    <variation>V</variation>
    <location>
        <begin position="722"/>
        <end position="723"/>
    </location>
</feature>
<feature type="sequence conflict" description="In Ref. 3; AAB58820." evidence="5" ref="3">
    <original>AVA</original>
    <variation>DGR</variation>
    <location>
        <begin position="736"/>
        <end position="738"/>
    </location>
</feature>
<name>PPDK_RHIME</name>
<sequence>MAKWVYTFGAGQAEGSAEDRDRLGGKGANLAEMCNLGLPVPPGLTIVTAACNSYLEKGRSMPEGLREQVREGITRMEKITGRVFGDTNRPLLLSVRSGARASMPGMMDTVLNLGLNDQSVHALGHDAGDARFAWDSYRRFIQMYGDVVMGVDHEVFEEVLEDEKARLGHEQDTELSAVEWQHVISRYKEAIEEVLGLPFPQDPEVQLWGAIGAVFSSWMNPRAITYRHLHGIPAGWGTAVNVQAMVFGNLGNSSATGVAFTRNPSTGEKELYGEFLVNAQGEDVVAGIRTPQNITEAARIASGSDKPSLEKLMPEAFAEFEKICNALERHYRDMQDIEFTIERGKLWMLQTRSGKRTAKSALKIAVDMAEEGLISKEEAVARIDPASLDQLLHPTIDPHARRDIIGSGLPASPGAATGEIVFSSDEAVQAVKEGRKVILVRVETSPEDIHGMHAAEGILTTRGGMTSHAAVVARGMGTPCVSGAGSIRVDQRNELLIAASVTLRKGDVITIDGSSGQVLKGEIPMLQPELSGDFGKIMQWADASRRMTVRTNAETPADARAARSFGAEGIGLCRTEHMFFEDDRINVMREMILAEDEAGRRTALAKLLPMQRSDFVELFSIMHGLPVTIRLLDPPLHEFLPKTDEEIAEVARVLTIDPAELRQRVDALHEFNPMLGHRGCRLAISYPEIAEMQARAIFEAAVQAAHDTGAAVVPEIMVPLVGLRAELDYVKARIEAVAKEVIGEAGVNIDYLIGTMIELPRAALRADTIAESADFFSFGTNDLTQTTFGISRDDAALFLATYQQKGIIEQDPFVSLDFEGVGELIQIAAERGRRTKNGLKLGICGEHGGDPASIRFCEEAGLDYVSCSPFRVPIARLAAAQATINGREVAEVQALAAS</sequence>
<keyword id="KW-0067">ATP-binding</keyword>
<keyword id="KW-0418">Kinase</keyword>
<keyword id="KW-0460">Magnesium</keyword>
<keyword id="KW-0479">Metal-binding</keyword>
<keyword id="KW-0547">Nucleotide-binding</keyword>
<keyword id="KW-0597">Phosphoprotein</keyword>
<keyword id="KW-1185">Reference proteome</keyword>
<keyword id="KW-0808">Transferase</keyword>